<dbReference type="EC" id="3.1.26.3" evidence="1"/>
<dbReference type="EMBL" id="CP000577">
    <property type="protein sequence ID" value="ABN75424.1"/>
    <property type="molecule type" value="Genomic_DNA"/>
</dbReference>
<dbReference type="RefSeq" id="WP_002722419.1">
    <property type="nucleotide sequence ID" value="NC_009049.1"/>
</dbReference>
<dbReference type="SMR" id="A3PGF8"/>
<dbReference type="GeneID" id="67448435"/>
<dbReference type="KEGG" id="rsh:Rsph17029_0308"/>
<dbReference type="HOGENOM" id="CLU_000907_1_1_5"/>
<dbReference type="GO" id="GO:0005737">
    <property type="term" value="C:cytoplasm"/>
    <property type="evidence" value="ECO:0007669"/>
    <property type="project" value="UniProtKB-SubCell"/>
</dbReference>
<dbReference type="GO" id="GO:0003725">
    <property type="term" value="F:double-stranded RNA binding"/>
    <property type="evidence" value="ECO:0007669"/>
    <property type="project" value="TreeGrafter"/>
</dbReference>
<dbReference type="GO" id="GO:0046872">
    <property type="term" value="F:metal ion binding"/>
    <property type="evidence" value="ECO:0007669"/>
    <property type="project" value="UniProtKB-KW"/>
</dbReference>
<dbReference type="GO" id="GO:0004525">
    <property type="term" value="F:ribonuclease III activity"/>
    <property type="evidence" value="ECO:0007669"/>
    <property type="project" value="UniProtKB-UniRule"/>
</dbReference>
<dbReference type="GO" id="GO:0019843">
    <property type="term" value="F:rRNA binding"/>
    <property type="evidence" value="ECO:0007669"/>
    <property type="project" value="UniProtKB-KW"/>
</dbReference>
<dbReference type="GO" id="GO:0006397">
    <property type="term" value="P:mRNA processing"/>
    <property type="evidence" value="ECO:0007669"/>
    <property type="project" value="UniProtKB-UniRule"/>
</dbReference>
<dbReference type="GO" id="GO:0010468">
    <property type="term" value="P:regulation of gene expression"/>
    <property type="evidence" value="ECO:0007669"/>
    <property type="project" value="TreeGrafter"/>
</dbReference>
<dbReference type="GO" id="GO:0006364">
    <property type="term" value="P:rRNA processing"/>
    <property type="evidence" value="ECO:0007669"/>
    <property type="project" value="UniProtKB-UniRule"/>
</dbReference>
<dbReference type="GO" id="GO:0008033">
    <property type="term" value="P:tRNA processing"/>
    <property type="evidence" value="ECO:0007669"/>
    <property type="project" value="UniProtKB-KW"/>
</dbReference>
<dbReference type="CDD" id="cd10845">
    <property type="entry name" value="DSRM_RNAse_III_family"/>
    <property type="match status" value="1"/>
</dbReference>
<dbReference type="CDD" id="cd00593">
    <property type="entry name" value="RIBOc"/>
    <property type="match status" value="1"/>
</dbReference>
<dbReference type="FunFam" id="1.10.1520.10:FF:000001">
    <property type="entry name" value="Ribonuclease 3"/>
    <property type="match status" value="1"/>
</dbReference>
<dbReference type="Gene3D" id="3.30.160.20">
    <property type="match status" value="1"/>
</dbReference>
<dbReference type="Gene3D" id="1.10.1520.10">
    <property type="entry name" value="Ribonuclease III domain"/>
    <property type="match status" value="1"/>
</dbReference>
<dbReference type="HAMAP" id="MF_00104">
    <property type="entry name" value="RNase_III"/>
    <property type="match status" value="1"/>
</dbReference>
<dbReference type="InterPro" id="IPR014720">
    <property type="entry name" value="dsRBD_dom"/>
</dbReference>
<dbReference type="InterPro" id="IPR011907">
    <property type="entry name" value="RNase_III"/>
</dbReference>
<dbReference type="InterPro" id="IPR000999">
    <property type="entry name" value="RNase_III_dom"/>
</dbReference>
<dbReference type="InterPro" id="IPR036389">
    <property type="entry name" value="RNase_III_sf"/>
</dbReference>
<dbReference type="NCBIfam" id="TIGR02191">
    <property type="entry name" value="RNaseIII"/>
    <property type="match status" value="1"/>
</dbReference>
<dbReference type="PANTHER" id="PTHR11207:SF0">
    <property type="entry name" value="RIBONUCLEASE 3"/>
    <property type="match status" value="1"/>
</dbReference>
<dbReference type="PANTHER" id="PTHR11207">
    <property type="entry name" value="RIBONUCLEASE III"/>
    <property type="match status" value="1"/>
</dbReference>
<dbReference type="Pfam" id="PF00035">
    <property type="entry name" value="dsrm"/>
    <property type="match status" value="1"/>
</dbReference>
<dbReference type="Pfam" id="PF14622">
    <property type="entry name" value="Ribonucleas_3_3"/>
    <property type="match status" value="1"/>
</dbReference>
<dbReference type="SMART" id="SM00358">
    <property type="entry name" value="DSRM"/>
    <property type="match status" value="1"/>
</dbReference>
<dbReference type="SMART" id="SM00535">
    <property type="entry name" value="RIBOc"/>
    <property type="match status" value="1"/>
</dbReference>
<dbReference type="SUPFAM" id="SSF54768">
    <property type="entry name" value="dsRNA-binding domain-like"/>
    <property type="match status" value="1"/>
</dbReference>
<dbReference type="SUPFAM" id="SSF69065">
    <property type="entry name" value="RNase III domain-like"/>
    <property type="match status" value="1"/>
</dbReference>
<dbReference type="PROSITE" id="PS50137">
    <property type="entry name" value="DS_RBD"/>
    <property type="match status" value="1"/>
</dbReference>
<dbReference type="PROSITE" id="PS00517">
    <property type="entry name" value="RNASE_3_1"/>
    <property type="match status" value="1"/>
</dbReference>
<dbReference type="PROSITE" id="PS50142">
    <property type="entry name" value="RNASE_3_2"/>
    <property type="match status" value="1"/>
</dbReference>
<organism>
    <name type="scientific">Cereibacter sphaeroides (strain ATCC 17029 / ATH 2.4.9)</name>
    <name type="common">Rhodobacter sphaeroides</name>
    <dbReference type="NCBI Taxonomy" id="349101"/>
    <lineage>
        <taxon>Bacteria</taxon>
        <taxon>Pseudomonadati</taxon>
        <taxon>Pseudomonadota</taxon>
        <taxon>Alphaproteobacteria</taxon>
        <taxon>Rhodobacterales</taxon>
        <taxon>Paracoccaceae</taxon>
        <taxon>Cereibacter</taxon>
    </lineage>
</organism>
<keyword id="KW-0963">Cytoplasm</keyword>
<keyword id="KW-0255">Endonuclease</keyword>
<keyword id="KW-0378">Hydrolase</keyword>
<keyword id="KW-0460">Magnesium</keyword>
<keyword id="KW-0479">Metal-binding</keyword>
<keyword id="KW-0507">mRNA processing</keyword>
<keyword id="KW-0540">Nuclease</keyword>
<keyword id="KW-0694">RNA-binding</keyword>
<keyword id="KW-0698">rRNA processing</keyword>
<keyword id="KW-0699">rRNA-binding</keyword>
<keyword id="KW-0819">tRNA processing</keyword>
<comment type="function">
    <text evidence="1">Digests double-stranded RNA. Involved in the processing of primary rRNA transcript to yield the immediate precursors to the large and small rRNAs (23S and 16S). Processes some mRNAs, and tRNAs when they are encoded in the rRNA operon. Processes pre-crRNA and tracrRNA of type II CRISPR loci if present in the organism.</text>
</comment>
<comment type="catalytic activity">
    <reaction evidence="1">
        <text>Endonucleolytic cleavage to 5'-phosphomonoester.</text>
        <dbReference type="EC" id="3.1.26.3"/>
    </reaction>
</comment>
<comment type="cofactor">
    <cofactor evidence="1">
        <name>Mg(2+)</name>
        <dbReference type="ChEBI" id="CHEBI:18420"/>
    </cofactor>
</comment>
<comment type="subunit">
    <text evidence="1">Homodimer.</text>
</comment>
<comment type="subcellular location">
    <subcellularLocation>
        <location evidence="1">Cytoplasm</location>
    </subcellularLocation>
</comment>
<comment type="similarity">
    <text evidence="1">Belongs to the ribonuclease III family.</text>
</comment>
<protein>
    <recommendedName>
        <fullName evidence="1">Ribonuclease 3</fullName>
        <ecNumber evidence="1">3.1.26.3</ecNumber>
    </recommendedName>
    <alternativeName>
        <fullName evidence="1">Ribonuclease III</fullName>
        <shortName evidence="1">RNase III</shortName>
    </alternativeName>
</protein>
<gene>
    <name evidence="1" type="primary">rnc</name>
    <name type="ordered locus">Rsph17029_0308</name>
</gene>
<name>RNC_CERS1</name>
<sequence>MKLSADLKAFEGRIGHQFREPERLLRAVTHSSLSSVTRSDNQRLEFLGDRVLGLVMAEALLAADRAASEGQLAPRFNALVRKETCAAVAREVALGDVLKLGRSEMMSGGRRKEALLGDALEAVIAAVYLDAGFEAARQLVLRLWGARIAQVERDARDAKTALQEWAQARGLPPPTYEAVDRSGPDHAPIFTVEVRLGNGETDRAAAGTKRVAEQAAARALLARMEARHD</sequence>
<proteinExistence type="inferred from homology"/>
<evidence type="ECO:0000255" key="1">
    <source>
        <dbReference type="HAMAP-Rule" id="MF_00104"/>
    </source>
</evidence>
<feature type="chain" id="PRO_1000075798" description="Ribonuclease 3">
    <location>
        <begin position="1"/>
        <end position="229"/>
    </location>
</feature>
<feature type="domain" description="RNase III" evidence="1">
    <location>
        <begin position="7"/>
        <end position="132"/>
    </location>
</feature>
<feature type="domain" description="DRBM" evidence="1">
    <location>
        <begin position="157"/>
        <end position="226"/>
    </location>
</feature>
<feature type="active site" evidence="1">
    <location>
        <position position="49"/>
    </location>
</feature>
<feature type="active site" evidence="1">
    <location>
        <position position="121"/>
    </location>
</feature>
<feature type="binding site" evidence="1">
    <location>
        <position position="45"/>
    </location>
    <ligand>
        <name>Mg(2+)</name>
        <dbReference type="ChEBI" id="CHEBI:18420"/>
    </ligand>
</feature>
<feature type="binding site" evidence="1">
    <location>
        <position position="118"/>
    </location>
    <ligand>
        <name>Mg(2+)</name>
        <dbReference type="ChEBI" id="CHEBI:18420"/>
    </ligand>
</feature>
<feature type="binding site" evidence="1">
    <location>
        <position position="121"/>
    </location>
    <ligand>
        <name>Mg(2+)</name>
        <dbReference type="ChEBI" id="CHEBI:18420"/>
    </ligand>
</feature>
<accession>A3PGF8</accession>
<reference key="1">
    <citation type="submission" date="2007-02" db="EMBL/GenBank/DDBJ databases">
        <title>Complete sequence of chromosome 1 of Rhodobacter sphaeroides ATCC 17029.</title>
        <authorList>
            <person name="Copeland A."/>
            <person name="Lucas S."/>
            <person name="Lapidus A."/>
            <person name="Barry K."/>
            <person name="Detter J.C."/>
            <person name="Glavina del Rio T."/>
            <person name="Hammon N."/>
            <person name="Israni S."/>
            <person name="Dalin E."/>
            <person name="Tice H."/>
            <person name="Pitluck S."/>
            <person name="Kiss H."/>
            <person name="Brettin T."/>
            <person name="Bruce D."/>
            <person name="Han C."/>
            <person name="Tapia R."/>
            <person name="Gilna P."/>
            <person name="Schmutz J."/>
            <person name="Larimer F."/>
            <person name="Land M."/>
            <person name="Hauser L."/>
            <person name="Kyrpides N."/>
            <person name="Mikhailova N."/>
            <person name="Richardson P."/>
            <person name="Mackenzie C."/>
            <person name="Choudhary M."/>
            <person name="Donohue T.J."/>
            <person name="Kaplan S."/>
        </authorList>
    </citation>
    <scope>NUCLEOTIDE SEQUENCE [LARGE SCALE GENOMIC DNA]</scope>
    <source>
        <strain>ATCC 17029 / ATH 2.4.9</strain>
    </source>
</reference>